<feature type="chain" id="PRO_0000198431" description="Ribonuclease P protein component">
    <location>
        <begin position="1"/>
        <end position="123"/>
    </location>
</feature>
<sequence>MPRATLPAEARLHRPSEFAAALKGRRLARGAFFIVSASPCAPADDQPARARLGLVIAKRFAARAVTRNTLKRVIREAFRARRLALPAQDYVVRLHSKLTPASLTALKRSARAEVDAHFTRIAR</sequence>
<comment type="function">
    <text evidence="1">RNaseP catalyzes the removal of the 5'-leader sequence from pre-tRNA to produce the mature 5'-terminus. It can also cleave other RNA substrates such as 4.5S RNA. The protein component plays an auxiliary but essential role in vivo by binding to the 5'-leader sequence and broadening the substrate specificity of the ribozyme.</text>
</comment>
<comment type="catalytic activity">
    <reaction evidence="1">
        <text>Endonucleolytic cleavage of RNA, removing 5'-extranucleotides from tRNA precursor.</text>
        <dbReference type="EC" id="3.1.26.5"/>
    </reaction>
</comment>
<comment type="subunit">
    <text evidence="1">Consists of a catalytic RNA component (M1 or rnpB) and a protein subunit.</text>
</comment>
<comment type="similarity">
    <text evidence="1">Belongs to the RnpA family.</text>
</comment>
<accession>Q7W2K3</accession>
<name>RNPA_BORPA</name>
<keyword id="KW-0255">Endonuclease</keyword>
<keyword id="KW-0378">Hydrolase</keyword>
<keyword id="KW-0540">Nuclease</keyword>
<keyword id="KW-0694">RNA-binding</keyword>
<keyword id="KW-0819">tRNA processing</keyword>
<gene>
    <name evidence="1" type="primary">rnpA</name>
    <name type="ordered locus">BPP4403</name>
</gene>
<proteinExistence type="inferred from homology"/>
<reference key="1">
    <citation type="journal article" date="2003" name="Nat. Genet.">
        <title>Comparative analysis of the genome sequences of Bordetella pertussis, Bordetella parapertussis and Bordetella bronchiseptica.</title>
        <authorList>
            <person name="Parkhill J."/>
            <person name="Sebaihia M."/>
            <person name="Preston A."/>
            <person name="Murphy L.D."/>
            <person name="Thomson N.R."/>
            <person name="Harris D.E."/>
            <person name="Holden M.T.G."/>
            <person name="Churcher C.M."/>
            <person name="Bentley S.D."/>
            <person name="Mungall K.L."/>
            <person name="Cerdeno-Tarraga A.-M."/>
            <person name="Temple L."/>
            <person name="James K.D."/>
            <person name="Harris B."/>
            <person name="Quail M.A."/>
            <person name="Achtman M."/>
            <person name="Atkin R."/>
            <person name="Baker S."/>
            <person name="Basham D."/>
            <person name="Bason N."/>
            <person name="Cherevach I."/>
            <person name="Chillingworth T."/>
            <person name="Collins M."/>
            <person name="Cronin A."/>
            <person name="Davis P."/>
            <person name="Doggett J."/>
            <person name="Feltwell T."/>
            <person name="Goble A."/>
            <person name="Hamlin N."/>
            <person name="Hauser H."/>
            <person name="Holroyd S."/>
            <person name="Jagels K."/>
            <person name="Leather S."/>
            <person name="Moule S."/>
            <person name="Norberczak H."/>
            <person name="O'Neil S."/>
            <person name="Ormond D."/>
            <person name="Price C."/>
            <person name="Rabbinowitsch E."/>
            <person name="Rutter S."/>
            <person name="Sanders M."/>
            <person name="Saunders D."/>
            <person name="Seeger K."/>
            <person name="Sharp S."/>
            <person name="Simmonds M."/>
            <person name="Skelton J."/>
            <person name="Squares R."/>
            <person name="Squares S."/>
            <person name="Stevens K."/>
            <person name="Unwin L."/>
            <person name="Whitehead S."/>
            <person name="Barrell B.G."/>
            <person name="Maskell D.J."/>
        </authorList>
    </citation>
    <scope>NUCLEOTIDE SEQUENCE [LARGE SCALE GENOMIC DNA]</scope>
    <source>
        <strain>12822 / ATCC BAA-587 / NCTC 13253</strain>
    </source>
</reference>
<evidence type="ECO:0000255" key="1">
    <source>
        <dbReference type="HAMAP-Rule" id="MF_00227"/>
    </source>
</evidence>
<dbReference type="EC" id="3.1.26.5" evidence="1"/>
<dbReference type="EMBL" id="BX640436">
    <property type="protein sequence ID" value="CAE39682.1"/>
    <property type="molecule type" value="Genomic_DNA"/>
</dbReference>
<dbReference type="RefSeq" id="WP_003816026.1">
    <property type="nucleotide sequence ID" value="NC_002928.3"/>
</dbReference>
<dbReference type="SMR" id="Q7W2K3"/>
<dbReference type="KEGG" id="bpa:BPP4403"/>
<dbReference type="HOGENOM" id="CLU_117179_11_1_4"/>
<dbReference type="Proteomes" id="UP000001421">
    <property type="component" value="Chromosome"/>
</dbReference>
<dbReference type="GO" id="GO:0030677">
    <property type="term" value="C:ribonuclease P complex"/>
    <property type="evidence" value="ECO:0007669"/>
    <property type="project" value="TreeGrafter"/>
</dbReference>
<dbReference type="GO" id="GO:0042781">
    <property type="term" value="F:3'-tRNA processing endoribonuclease activity"/>
    <property type="evidence" value="ECO:0007669"/>
    <property type="project" value="TreeGrafter"/>
</dbReference>
<dbReference type="GO" id="GO:0004526">
    <property type="term" value="F:ribonuclease P activity"/>
    <property type="evidence" value="ECO:0007669"/>
    <property type="project" value="UniProtKB-UniRule"/>
</dbReference>
<dbReference type="GO" id="GO:0000049">
    <property type="term" value="F:tRNA binding"/>
    <property type="evidence" value="ECO:0007669"/>
    <property type="project" value="UniProtKB-UniRule"/>
</dbReference>
<dbReference type="GO" id="GO:0001682">
    <property type="term" value="P:tRNA 5'-leader removal"/>
    <property type="evidence" value="ECO:0007669"/>
    <property type="project" value="UniProtKB-UniRule"/>
</dbReference>
<dbReference type="Gene3D" id="3.30.230.10">
    <property type="match status" value="1"/>
</dbReference>
<dbReference type="HAMAP" id="MF_00227">
    <property type="entry name" value="RNase_P"/>
    <property type="match status" value="1"/>
</dbReference>
<dbReference type="InterPro" id="IPR020568">
    <property type="entry name" value="Ribosomal_Su5_D2-typ_SF"/>
</dbReference>
<dbReference type="InterPro" id="IPR014721">
    <property type="entry name" value="Ribsml_uS5_D2-typ_fold_subgr"/>
</dbReference>
<dbReference type="InterPro" id="IPR000100">
    <property type="entry name" value="RNase_P"/>
</dbReference>
<dbReference type="InterPro" id="IPR020539">
    <property type="entry name" value="RNase_P_CS"/>
</dbReference>
<dbReference type="NCBIfam" id="NF000707">
    <property type="entry name" value="PRK00038.1"/>
    <property type="match status" value="1"/>
</dbReference>
<dbReference type="NCBIfam" id="TIGR00188">
    <property type="entry name" value="rnpA"/>
    <property type="match status" value="1"/>
</dbReference>
<dbReference type="PANTHER" id="PTHR33992">
    <property type="entry name" value="RIBONUCLEASE P PROTEIN COMPONENT"/>
    <property type="match status" value="1"/>
</dbReference>
<dbReference type="PANTHER" id="PTHR33992:SF1">
    <property type="entry name" value="RIBONUCLEASE P PROTEIN COMPONENT"/>
    <property type="match status" value="1"/>
</dbReference>
<dbReference type="Pfam" id="PF00825">
    <property type="entry name" value="Ribonuclease_P"/>
    <property type="match status" value="1"/>
</dbReference>
<dbReference type="SUPFAM" id="SSF54211">
    <property type="entry name" value="Ribosomal protein S5 domain 2-like"/>
    <property type="match status" value="1"/>
</dbReference>
<dbReference type="PROSITE" id="PS00648">
    <property type="entry name" value="RIBONUCLEASE_P"/>
    <property type="match status" value="1"/>
</dbReference>
<organism>
    <name type="scientific">Bordetella parapertussis (strain 12822 / ATCC BAA-587 / NCTC 13253)</name>
    <dbReference type="NCBI Taxonomy" id="257311"/>
    <lineage>
        <taxon>Bacteria</taxon>
        <taxon>Pseudomonadati</taxon>
        <taxon>Pseudomonadota</taxon>
        <taxon>Betaproteobacteria</taxon>
        <taxon>Burkholderiales</taxon>
        <taxon>Alcaligenaceae</taxon>
        <taxon>Bordetella</taxon>
    </lineage>
</organism>
<protein>
    <recommendedName>
        <fullName evidence="1">Ribonuclease P protein component</fullName>
        <shortName evidence="1">RNase P protein</shortName>
        <shortName evidence="1">RNaseP protein</shortName>
        <ecNumber evidence="1">3.1.26.5</ecNumber>
    </recommendedName>
    <alternativeName>
        <fullName evidence="1">Protein C5</fullName>
    </alternativeName>
</protein>